<accession>Q1XDC8</accession>
<proteinExistence type="inferred from homology"/>
<dbReference type="EMBL" id="AP006715">
    <property type="protein sequence ID" value="BAE92483.1"/>
    <property type="molecule type" value="Genomic_DNA"/>
</dbReference>
<dbReference type="RefSeq" id="YP_537040.1">
    <property type="nucleotide sequence ID" value="NC_007932.1"/>
</dbReference>
<dbReference type="SMR" id="Q1XDC8"/>
<dbReference type="GeneID" id="3978853"/>
<dbReference type="GO" id="GO:0009507">
    <property type="term" value="C:chloroplast"/>
    <property type="evidence" value="ECO:0007669"/>
    <property type="project" value="UniProtKB-SubCell"/>
</dbReference>
<dbReference type="GO" id="GO:1990904">
    <property type="term" value="C:ribonucleoprotein complex"/>
    <property type="evidence" value="ECO:0007669"/>
    <property type="project" value="UniProtKB-KW"/>
</dbReference>
<dbReference type="GO" id="GO:0005840">
    <property type="term" value="C:ribosome"/>
    <property type="evidence" value="ECO:0007669"/>
    <property type="project" value="UniProtKB-KW"/>
</dbReference>
<dbReference type="GO" id="GO:0070181">
    <property type="term" value="F:small ribosomal subunit rRNA binding"/>
    <property type="evidence" value="ECO:0007669"/>
    <property type="project" value="TreeGrafter"/>
</dbReference>
<dbReference type="GO" id="GO:0003735">
    <property type="term" value="F:structural constituent of ribosome"/>
    <property type="evidence" value="ECO:0007669"/>
    <property type="project" value="InterPro"/>
</dbReference>
<dbReference type="GO" id="GO:0006412">
    <property type="term" value="P:translation"/>
    <property type="evidence" value="ECO:0007669"/>
    <property type="project" value="UniProtKB-UniRule"/>
</dbReference>
<dbReference type="CDD" id="cd15487">
    <property type="entry name" value="bS6_chloro_cyano"/>
    <property type="match status" value="1"/>
</dbReference>
<dbReference type="Gene3D" id="3.30.70.60">
    <property type="match status" value="1"/>
</dbReference>
<dbReference type="HAMAP" id="MF_00360">
    <property type="entry name" value="Ribosomal_bS6"/>
    <property type="match status" value="1"/>
</dbReference>
<dbReference type="InterPro" id="IPR000529">
    <property type="entry name" value="Ribosomal_bS6"/>
</dbReference>
<dbReference type="InterPro" id="IPR020815">
    <property type="entry name" value="Ribosomal_bS6_CS"/>
</dbReference>
<dbReference type="InterPro" id="IPR035980">
    <property type="entry name" value="Ribosomal_bS6_sf"/>
</dbReference>
<dbReference type="InterPro" id="IPR020814">
    <property type="entry name" value="Ribosomal_S6_plastid/chlpt"/>
</dbReference>
<dbReference type="InterPro" id="IPR014717">
    <property type="entry name" value="Transl_elong_EF1B/ribsomal_bS6"/>
</dbReference>
<dbReference type="NCBIfam" id="TIGR00166">
    <property type="entry name" value="S6"/>
    <property type="match status" value="1"/>
</dbReference>
<dbReference type="PANTHER" id="PTHR21011">
    <property type="entry name" value="MITOCHONDRIAL 28S RIBOSOMAL PROTEIN S6"/>
    <property type="match status" value="1"/>
</dbReference>
<dbReference type="PANTHER" id="PTHR21011:SF1">
    <property type="entry name" value="SMALL RIBOSOMAL SUBUNIT PROTEIN BS6M"/>
    <property type="match status" value="1"/>
</dbReference>
<dbReference type="Pfam" id="PF01250">
    <property type="entry name" value="Ribosomal_S6"/>
    <property type="match status" value="1"/>
</dbReference>
<dbReference type="SUPFAM" id="SSF54995">
    <property type="entry name" value="Ribosomal protein S6"/>
    <property type="match status" value="1"/>
</dbReference>
<dbReference type="PROSITE" id="PS01048">
    <property type="entry name" value="RIBOSOMAL_S6"/>
    <property type="match status" value="1"/>
</dbReference>
<name>RR6_PYRYE</name>
<organism>
    <name type="scientific">Pyropia yezoensis</name>
    <name type="common">Susabi-nori</name>
    <name type="synonym">Porphyra yezoensis</name>
    <dbReference type="NCBI Taxonomy" id="2788"/>
    <lineage>
        <taxon>Eukaryota</taxon>
        <taxon>Rhodophyta</taxon>
        <taxon>Bangiophyceae</taxon>
        <taxon>Bangiales</taxon>
        <taxon>Bangiaceae</taxon>
        <taxon>Pyropia</taxon>
    </lineage>
</organism>
<keyword id="KW-0150">Chloroplast</keyword>
<keyword id="KW-0934">Plastid</keyword>
<keyword id="KW-0687">Ribonucleoprotein</keyword>
<keyword id="KW-0689">Ribosomal protein</keyword>
<keyword id="KW-0694">RNA-binding</keyword>
<keyword id="KW-0699">rRNA-binding</keyword>
<comment type="function">
    <text evidence="1">Binds together with bS18 to 16S ribosomal RNA.</text>
</comment>
<comment type="subcellular location">
    <subcellularLocation>
        <location>Plastid</location>
        <location>Chloroplast</location>
    </subcellularLocation>
</comment>
<comment type="similarity">
    <text evidence="1">Belongs to the bacterial ribosomal protein bS6 family.</text>
</comment>
<evidence type="ECO:0000255" key="1">
    <source>
        <dbReference type="HAMAP-Rule" id="MF_00360"/>
    </source>
</evidence>
<evidence type="ECO:0000305" key="2"/>
<protein>
    <recommendedName>
        <fullName evidence="1">Small ribosomal subunit protein bS6c</fullName>
    </recommendedName>
    <alternativeName>
        <fullName evidence="2">30S ribosomal protein S6, chloroplastic</fullName>
    </alternativeName>
</protein>
<gene>
    <name evidence="1" type="primary">rps6</name>
</gene>
<sequence length="109" mass="12762">MLTAENIQLNCYETVYILKSDLNEDKTLSIINDYKSMLTNGGAKNIVLQHRGRRHLSYTINDYHDGIYVQVNYEGNGQLVKSFEKSLRFDDNIIRYLTNKQKRNIKKDS</sequence>
<geneLocation type="chloroplast"/>
<feature type="chain" id="PRO_0000277029" description="Small ribosomal subunit protein bS6c">
    <location>
        <begin position="1"/>
        <end position="109"/>
    </location>
</feature>
<reference key="1">
    <citation type="submission" date="2003-11" db="EMBL/GenBank/DDBJ databases">
        <title>Whole genome sequence of Porphyra yezoensis chloroplast.</title>
        <authorList>
            <person name="Kunimoto M."/>
            <person name="Morishima K."/>
            <person name="Yoshikawa M."/>
            <person name="Fukuda S."/>
            <person name="Kobayashi T."/>
            <person name="Kobayashi M."/>
            <person name="Okazaki T."/>
            <person name="Ohara I."/>
            <person name="Nakayama I."/>
        </authorList>
    </citation>
    <scope>NUCLEOTIDE SEQUENCE [LARGE SCALE GENOMIC DNA]</scope>
    <source>
        <strain>U-51</strain>
    </source>
</reference>